<protein>
    <recommendedName>
        <fullName evidence="1">tRNA-specific 2-thiouridylase MnmA 1</fullName>
        <ecNumber evidence="1">2.8.1.13</ecNumber>
    </recommendedName>
</protein>
<gene>
    <name evidence="1" type="primary">mnmA1</name>
    <name type="synonym">trmU1</name>
    <name type="ordered locus">TTE1243</name>
</gene>
<evidence type="ECO:0000255" key="1">
    <source>
        <dbReference type="HAMAP-Rule" id="MF_00144"/>
    </source>
</evidence>
<dbReference type="EC" id="2.8.1.13" evidence="1"/>
<dbReference type="EMBL" id="AE008691">
    <property type="protein sequence ID" value="AAM24468.1"/>
    <property type="molecule type" value="Genomic_DNA"/>
</dbReference>
<dbReference type="RefSeq" id="WP_011025567.1">
    <property type="nucleotide sequence ID" value="NC_003869.1"/>
</dbReference>
<dbReference type="SMR" id="Q8RAH7"/>
<dbReference type="STRING" id="273068.TTE1243"/>
<dbReference type="KEGG" id="tte:TTE1243"/>
<dbReference type="eggNOG" id="COG0482">
    <property type="taxonomic scope" value="Bacteria"/>
</dbReference>
<dbReference type="HOGENOM" id="CLU_035188_0_0_9"/>
<dbReference type="OrthoDB" id="9800696at2"/>
<dbReference type="Proteomes" id="UP000000555">
    <property type="component" value="Chromosome"/>
</dbReference>
<dbReference type="GO" id="GO:0005737">
    <property type="term" value="C:cytoplasm"/>
    <property type="evidence" value="ECO:0007669"/>
    <property type="project" value="UniProtKB-SubCell"/>
</dbReference>
<dbReference type="GO" id="GO:0005524">
    <property type="term" value="F:ATP binding"/>
    <property type="evidence" value="ECO:0007669"/>
    <property type="project" value="UniProtKB-KW"/>
</dbReference>
<dbReference type="GO" id="GO:0000049">
    <property type="term" value="F:tRNA binding"/>
    <property type="evidence" value="ECO:0007669"/>
    <property type="project" value="UniProtKB-KW"/>
</dbReference>
<dbReference type="GO" id="GO:0103016">
    <property type="term" value="F:tRNA-uridine 2-sulfurtransferase activity"/>
    <property type="evidence" value="ECO:0007669"/>
    <property type="project" value="UniProtKB-EC"/>
</dbReference>
<dbReference type="GO" id="GO:0002143">
    <property type="term" value="P:tRNA wobble position uridine thiolation"/>
    <property type="evidence" value="ECO:0007669"/>
    <property type="project" value="TreeGrafter"/>
</dbReference>
<dbReference type="CDD" id="cd01998">
    <property type="entry name" value="MnmA_TRMU-like"/>
    <property type="match status" value="1"/>
</dbReference>
<dbReference type="FunFam" id="2.30.30.280:FF:000001">
    <property type="entry name" value="tRNA-specific 2-thiouridylase MnmA"/>
    <property type="match status" value="1"/>
</dbReference>
<dbReference type="FunFam" id="2.40.30.10:FF:000023">
    <property type="entry name" value="tRNA-specific 2-thiouridylase MnmA"/>
    <property type="match status" value="1"/>
</dbReference>
<dbReference type="FunFam" id="3.40.50.620:FF:000115">
    <property type="entry name" value="tRNA-specific 2-thiouridylase MnmA"/>
    <property type="match status" value="1"/>
</dbReference>
<dbReference type="Gene3D" id="2.30.30.280">
    <property type="entry name" value="Adenine nucleotide alpha hydrolases-like domains"/>
    <property type="match status" value="1"/>
</dbReference>
<dbReference type="Gene3D" id="3.40.50.620">
    <property type="entry name" value="HUPs"/>
    <property type="match status" value="1"/>
</dbReference>
<dbReference type="Gene3D" id="2.40.30.10">
    <property type="entry name" value="Translation factors"/>
    <property type="match status" value="1"/>
</dbReference>
<dbReference type="HAMAP" id="MF_00144">
    <property type="entry name" value="tRNA_thiouridyl_MnmA"/>
    <property type="match status" value="1"/>
</dbReference>
<dbReference type="InterPro" id="IPR004506">
    <property type="entry name" value="MnmA-like"/>
</dbReference>
<dbReference type="InterPro" id="IPR046885">
    <property type="entry name" value="MnmA-like_C"/>
</dbReference>
<dbReference type="InterPro" id="IPR046884">
    <property type="entry name" value="MnmA-like_central"/>
</dbReference>
<dbReference type="InterPro" id="IPR023382">
    <property type="entry name" value="MnmA-like_central_sf"/>
</dbReference>
<dbReference type="InterPro" id="IPR014729">
    <property type="entry name" value="Rossmann-like_a/b/a_fold"/>
</dbReference>
<dbReference type="NCBIfam" id="NF001138">
    <property type="entry name" value="PRK00143.1"/>
    <property type="match status" value="1"/>
</dbReference>
<dbReference type="NCBIfam" id="TIGR00420">
    <property type="entry name" value="trmU"/>
    <property type="match status" value="1"/>
</dbReference>
<dbReference type="PANTHER" id="PTHR11933:SF5">
    <property type="entry name" value="MITOCHONDRIAL TRNA-SPECIFIC 2-THIOURIDYLASE 1"/>
    <property type="match status" value="1"/>
</dbReference>
<dbReference type="PANTHER" id="PTHR11933">
    <property type="entry name" value="TRNA 5-METHYLAMINOMETHYL-2-THIOURIDYLATE -METHYLTRANSFERASE"/>
    <property type="match status" value="1"/>
</dbReference>
<dbReference type="Pfam" id="PF03054">
    <property type="entry name" value="tRNA_Me_trans"/>
    <property type="match status" value="1"/>
</dbReference>
<dbReference type="Pfam" id="PF20258">
    <property type="entry name" value="tRNA_Me_trans_C"/>
    <property type="match status" value="1"/>
</dbReference>
<dbReference type="Pfam" id="PF20259">
    <property type="entry name" value="tRNA_Me_trans_M"/>
    <property type="match status" value="1"/>
</dbReference>
<dbReference type="SUPFAM" id="SSF52402">
    <property type="entry name" value="Adenine nucleotide alpha hydrolases-like"/>
    <property type="match status" value="1"/>
</dbReference>
<reference key="1">
    <citation type="journal article" date="2002" name="Genome Res.">
        <title>A complete sequence of the T. tengcongensis genome.</title>
        <authorList>
            <person name="Bao Q."/>
            <person name="Tian Y."/>
            <person name="Li W."/>
            <person name="Xu Z."/>
            <person name="Xuan Z."/>
            <person name="Hu S."/>
            <person name="Dong W."/>
            <person name="Yang J."/>
            <person name="Chen Y."/>
            <person name="Xue Y."/>
            <person name="Xu Y."/>
            <person name="Lai X."/>
            <person name="Huang L."/>
            <person name="Dong X."/>
            <person name="Ma Y."/>
            <person name="Ling L."/>
            <person name="Tan H."/>
            <person name="Chen R."/>
            <person name="Wang J."/>
            <person name="Yu J."/>
            <person name="Yang H."/>
        </authorList>
    </citation>
    <scope>NUCLEOTIDE SEQUENCE [LARGE SCALE GENOMIC DNA]</scope>
    <source>
        <strain>DSM 15242 / JCM 11007 / NBRC 100824 / MB4</strain>
    </source>
</reference>
<name>MNMA1_CALS4</name>
<proteinExistence type="inferred from homology"/>
<sequence length="364" mass="41666">MEVNNRVVVGMSGGVDSSVTAYLLKEQGFEVIGVTMRVWVDPYGKARDDDKSCCSLKAIHDAKKVAEILGIPHYTVNLSEVFYDKIVKYFIDEYLKGRTPNPCVFCNRFIKFGDLLEKAHELGAYYIATGHYVRKEYDEDRKRYLLKKGLDFKKDQSYMLYRLTQEQLKHALFPLGNYTKEEVRALAEKIGLPVADKRESQEICFIPDNDYKAFIKRQIKKDVKPGEFRDIHGNFLGYHKGIINYTIGQRKGLGLSSDRPLYVVDIDPENNVVIVGHQEDVWGEELISSNNNFISIEKLEEEIKVTAKIRYTAKEDEAIIKPYGDDKVLVRFLRPQRAITPGQSVVFYDGDVVVGGGIIEKKVR</sequence>
<keyword id="KW-0067">ATP-binding</keyword>
<keyword id="KW-0963">Cytoplasm</keyword>
<keyword id="KW-1015">Disulfide bond</keyword>
<keyword id="KW-0547">Nucleotide-binding</keyword>
<keyword id="KW-1185">Reference proteome</keyword>
<keyword id="KW-0694">RNA-binding</keyword>
<keyword id="KW-0808">Transferase</keyword>
<keyword id="KW-0819">tRNA processing</keyword>
<keyword id="KW-0820">tRNA-binding</keyword>
<organism>
    <name type="scientific">Caldanaerobacter subterraneus subsp. tengcongensis (strain DSM 15242 / JCM 11007 / NBRC 100824 / MB4)</name>
    <name type="common">Thermoanaerobacter tengcongensis</name>
    <dbReference type="NCBI Taxonomy" id="273068"/>
    <lineage>
        <taxon>Bacteria</taxon>
        <taxon>Bacillati</taxon>
        <taxon>Bacillota</taxon>
        <taxon>Clostridia</taxon>
        <taxon>Thermoanaerobacterales</taxon>
        <taxon>Thermoanaerobacteraceae</taxon>
        <taxon>Caldanaerobacter</taxon>
    </lineage>
</organism>
<accession>Q8RAH7</accession>
<feature type="chain" id="PRO_0000121694" description="tRNA-specific 2-thiouridylase MnmA 1">
    <location>
        <begin position="1"/>
        <end position="364"/>
    </location>
</feature>
<feature type="region of interest" description="Interaction with tRNA" evidence="1">
    <location>
        <begin position="154"/>
        <end position="156"/>
    </location>
</feature>
<feature type="region of interest" description="Interaction with tRNA" evidence="1">
    <location>
        <begin position="310"/>
        <end position="311"/>
    </location>
</feature>
<feature type="active site" description="Nucleophile" evidence="1">
    <location>
        <position position="106"/>
    </location>
</feature>
<feature type="active site" description="Cysteine persulfide intermediate" evidence="1">
    <location>
        <position position="204"/>
    </location>
</feature>
<feature type="binding site" evidence="1">
    <location>
        <begin position="10"/>
        <end position="17"/>
    </location>
    <ligand>
        <name>ATP</name>
        <dbReference type="ChEBI" id="CHEBI:30616"/>
    </ligand>
</feature>
<feature type="binding site" evidence="1">
    <location>
        <position position="36"/>
    </location>
    <ligand>
        <name>ATP</name>
        <dbReference type="ChEBI" id="CHEBI:30616"/>
    </ligand>
</feature>
<feature type="binding site" evidence="1">
    <location>
        <position position="130"/>
    </location>
    <ligand>
        <name>ATP</name>
        <dbReference type="ChEBI" id="CHEBI:30616"/>
    </ligand>
</feature>
<feature type="site" description="Interaction with tRNA" evidence="1">
    <location>
        <position position="131"/>
    </location>
</feature>
<feature type="site" description="Interaction with tRNA" evidence="1">
    <location>
        <position position="343"/>
    </location>
</feature>
<feature type="disulfide bond" description="Alternate" evidence="1">
    <location>
        <begin position="106"/>
        <end position="204"/>
    </location>
</feature>
<comment type="function">
    <text evidence="1">Catalyzes the 2-thiolation of uridine at the wobble position (U34) of tRNA, leading to the formation of s(2)U34.</text>
</comment>
<comment type="catalytic activity">
    <reaction evidence="1">
        <text>S-sulfanyl-L-cysteinyl-[protein] + uridine(34) in tRNA + AH2 + ATP = 2-thiouridine(34) in tRNA + L-cysteinyl-[protein] + A + AMP + diphosphate + H(+)</text>
        <dbReference type="Rhea" id="RHEA:47032"/>
        <dbReference type="Rhea" id="RHEA-COMP:10131"/>
        <dbReference type="Rhea" id="RHEA-COMP:11726"/>
        <dbReference type="Rhea" id="RHEA-COMP:11727"/>
        <dbReference type="Rhea" id="RHEA-COMP:11728"/>
        <dbReference type="ChEBI" id="CHEBI:13193"/>
        <dbReference type="ChEBI" id="CHEBI:15378"/>
        <dbReference type="ChEBI" id="CHEBI:17499"/>
        <dbReference type="ChEBI" id="CHEBI:29950"/>
        <dbReference type="ChEBI" id="CHEBI:30616"/>
        <dbReference type="ChEBI" id="CHEBI:33019"/>
        <dbReference type="ChEBI" id="CHEBI:61963"/>
        <dbReference type="ChEBI" id="CHEBI:65315"/>
        <dbReference type="ChEBI" id="CHEBI:87170"/>
        <dbReference type="ChEBI" id="CHEBI:456215"/>
        <dbReference type="EC" id="2.8.1.13"/>
    </reaction>
</comment>
<comment type="subcellular location">
    <subcellularLocation>
        <location evidence="1">Cytoplasm</location>
    </subcellularLocation>
</comment>
<comment type="similarity">
    <text evidence="1">Belongs to the MnmA/TRMU family.</text>
</comment>